<proteinExistence type="inferred from homology"/>
<gene>
    <name evidence="1" type="primary">nuoK</name>
    <name type="ordered locus">MXAN_1083</name>
</gene>
<reference key="1">
    <citation type="journal article" date="2006" name="Proc. Natl. Acad. Sci. U.S.A.">
        <title>Evolution of sensory complexity recorded in a myxobacterial genome.</title>
        <authorList>
            <person name="Goldman B.S."/>
            <person name="Nierman W.C."/>
            <person name="Kaiser D."/>
            <person name="Slater S.C."/>
            <person name="Durkin A.S."/>
            <person name="Eisen J.A."/>
            <person name="Ronning C.M."/>
            <person name="Barbazuk W.B."/>
            <person name="Blanchard M."/>
            <person name="Field C."/>
            <person name="Halling C."/>
            <person name="Hinkle G."/>
            <person name="Iartchuk O."/>
            <person name="Kim H.S."/>
            <person name="Mackenzie C."/>
            <person name="Madupu R."/>
            <person name="Miller N."/>
            <person name="Shvartsbeyn A."/>
            <person name="Sullivan S.A."/>
            <person name="Vaudin M."/>
            <person name="Wiegand R."/>
            <person name="Kaplan H.B."/>
        </authorList>
    </citation>
    <scope>NUCLEOTIDE SEQUENCE [LARGE SCALE GENOMIC DNA]</scope>
    <source>
        <strain>DK1622</strain>
    </source>
</reference>
<evidence type="ECO:0000255" key="1">
    <source>
        <dbReference type="HAMAP-Rule" id="MF_01456"/>
    </source>
</evidence>
<dbReference type="EC" id="7.1.1.-" evidence="1"/>
<dbReference type="EMBL" id="CP000113">
    <property type="protein sequence ID" value="ABF92070.1"/>
    <property type="molecule type" value="Genomic_DNA"/>
</dbReference>
<dbReference type="RefSeq" id="WP_011551203.1">
    <property type="nucleotide sequence ID" value="NC_008095.1"/>
</dbReference>
<dbReference type="SMR" id="Q1DDD0"/>
<dbReference type="STRING" id="246197.MXAN_1083"/>
<dbReference type="EnsemblBacteria" id="ABF92070">
    <property type="protein sequence ID" value="ABF92070"/>
    <property type="gene ID" value="MXAN_1083"/>
</dbReference>
<dbReference type="GeneID" id="41358534"/>
<dbReference type="KEGG" id="mxa:MXAN_1083"/>
<dbReference type="eggNOG" id="COG0713">
    <property type="taxonomic scope" value="Bacteria"/>
</dbReference>
<dbReference type="HOGENOM" id="CLU_144724_0_0_7"/>
<dbReference type="OrthoDB" id="9810120at2"/>
<dbReference type="Proteomes" id="UP000002402">
    <property type="component" value="Chromosome"/>
</dbReference>
<dbReference type="GO" id="GO:0030964">
    <property type="term" value="C:NADH dehydrogenase complex"/>
    <property type="evidence" value="ECO:0007669"/>
    <property type="project" value="TreeGrafter"/>
</dbReference>
<dbReference type="GO" id="GO:0005886">
    <property type="term" value="C:plasma membrane"/>
    <property type="evidence" value="ECO:0007669"/>
    <property type="project" value="UniProtKB-SubCell"/>
</dbReference>
<dbReference type="GO" id="GO:0050136">
    <property type="term" value="F:NADH:ubiquinone reductase (non-electrogenic) activity"/>
    <property type="evidence" value="ECO:0007669"/>
    <property type="project" value="UniProtKB-UniRule"/>
</dbReference>
<dbReference type="GO" id="GO:0048038">
    <property type="term" value="F:quinone binding"/>
    <property type="evidence" value="ECO:0007669"/>
    <property type="project" value="UniProtKB-KW"/>
</dbReference>
<dbReference type="GO" id="GO:0042773">
    <property type="term" value="P:ATP synthesis coupled electron transport"/>
    <property type="evidence" value="ECO:0007669"/>
    <property type="project" value="InterPro"/>
</dbReference>
<dbReference type="FunFam" id="1.10.287.3510:FF:000001">
    <property type="entry name" value="NADH-quinone oxidoreductase subunit K"/>
    <property type="match status" value="1"/>
</dbReference>
<dbReference type="Gene3D" id="1.10.287.3510">
    <property type="match status" value="1"/>
</dbReference>
<dbReference type="HAMAP" id="MF_01456">
    <property type="entry name" value="NDH1_NuoK"/>
    <property type="match status" value="1"/>
</dbReference>
<dbReference type="InterPro" id="IPR001133">
    <property type="entry name" value="NADH_UbQ_OxRdtase_chain4L/K"/>
</dbReference>
<dbReference type="InterPro" id="IPR039428">
    <property type="entry name" value="NUOK/Mnh_C1-like"/>
</dbReference>
<dbReference type="NCBIfam" id="NF004320">
    <property type="entry name" value="PRK05715.1-2"/>
    <property type="match status" value="1"/>
</dbReference>
<dbReference type="NCBIfam" id="NF004321">
    <property type="entry name" value="PRK05715.1-3"/>
    <property type="match status" value="1"/>
</dbReference>
<dbReference type="NCBIfam" id="NF004323">
    <property type="entry name" value="PRK05715.1-5"/>
    <property type="match status" value="1"/>
</dbReference>
<dbReference type="PANTHER" id="PTHR11434:SF21">
    <property type="entry name" value="NADH DEHYDROGENASE SUBUNIT 4L-RELATED"/>
    <property type="match status" value="1"/>
</dbReference>
<dbReference type="PANTHER" id="PTHR11434">
    <property type="entry name" value="NADH-UBIQUINONE OXIDOREDUCTASE SUBUNIT ND4L"/>
    <property type="match status" value="1"/>
</dbReference>
<dbReference type="Pfam" id="PF00420">
    <property type="entry name" value="Oxidored_q2"/>
    <property type="match status" value="1"/>
</dbReference>
<accession>Q1DDD0</accession>
<protein>
    <recommendedName>
        <fullName evidence="1">NADH-quinone oxidoreductase subunit K</fullName>
        <ecNumber evidence="1">7.1.1.-</ecNumber>
    </recommendedName>
    <alternativeName>
        <fullName evidence="1">NADH dehydrogenase I subunit K</fullName>
    </alternativeName>
    <alternativeName>
        <fullName evidence="1">NDH-1 subunit K</fullName>
    </alternativeName>
</protein>
<keyword id="KW-0997">Cell inner membrane</keyword>
<keyword id="KW-1003">Cell membrane</keyword>
<keyword id="KW-0472">Membrane</keyword>
<keyword id="KW-0520">NAD</keyword>
<keyword id="KW-0874">Quinone</keyword>
<keyword id="KW-1185">Reference proteome</keyword>
<keyword id="KW-1278">Translocase</keyword>
<keyword id="KW-0812">Transmembrane</keyword>
<keyword id="KW-1133">Transmembrane helix</keyword>
<keyword id="KW-0813">Transport</keyword>
<keyword id="KW-0830">Ubiquinone</keyword>
<name>NUOK_MYXXD</name>
<comment type="function">
    <text evidence="1">NDH-1 shuttles electrons from NADH, via FMN and iron-sulfur (Fe-S) centers, to quinones in the respiratory chain. The immediate electron acceptor for the enzyme in this species is believed to be ubiquinone. Couples the redox reaction to proton translocation (for every two electrons transferred, four hydrogen ions are translocated across the cytoplasmic membrane), and thus conserves the redox energy in a proton gradient.</text>
</comment>
<comment type="catalytic activity">
    <reaction evidence="1">
        <text>a quinone + NADH + 5 H(+)(in) = a quinol + NAD(+) + 4 H(+)(out)</text>
        <dbReference type="Rhea" id="RHEA:57888"/>
        <dbReference type="ChEBI" id="CHEBI:15378"/>
        <dbReference type="ChEBI" id="CHEBI:24646"/>
        <dbReference type="ChEBI" id="CHEBI:57540"/>
        <dbReference type="ChEBI" id="CHEBI:57945"/>
        <dbReference type="ChEBI" id="CHEBI:132124"/>
    </reaction>
</comment>
<comment type="subunit">
    <text evidence="1">NDH-1 is composed of 14 different subunits. Subunits NuoA, H, J, K, L, M, N constitute the membrane sector of the complex.</text>
</comment>
<comment type="subcellular location">
    <subcellularLocation>
        <location evidence="1">Cell inner membrane</location>
        <topology evidence="1">Multi-pass membrane protein</topology>
    </subcellularLocation>
</comment>
<comment type="similarity">
    <text evidence="1">Belongs to the complex I subunit 4L family.</text>
</comment>
<feature type="chain" id="PRO_0000390138" description="NADH-quinone oxidoreductase subunit K">
    <location>
        <begin position="1"/>
        <end position="100"/>
    </location>
</feature>
<feature type="transmembrane region" description="Helical" evidence="1">
    <location>
        <begin position="4"/>
        <end position="24"/>
    </location>
</feature>
<feature type="transmembrane region" description="Helical" evidence="1">
    <location>
        <begin position="29"/>
        <end position="49"/>
    </location>
</feature>
<feature type="transmembrane region" description="Helical" evidence="1">
    <location>
        <begin position="63"/>
        <end position="83"/>
    </location>
</feature>
<sequence length="100" mass="10865">MVPITYYLLLAAALFCMGMFGVLVRRNALVVFMSVELMLNAANLTFVAFARMRGDNLGHVSAFFVIAVAAAEAAIGLAIVIAVFRSRGSILLEDLRTMKH</sequence>
<organism>
    <name type="scientific">Myxococcus xanthus (strain DK1622)</name>
    <dbReference type="NCBI Taxonomy" id="246197"/>
    <lineage>
        <taxon>Bacteria</taxon>
        <taxon>Pseudomonadati</taxon>
        <taxon>Myxococcota</taxon>
        <taxon>Myxococcia</taxon>
        <taxon>Myxococcales</taxon>
        <taxon>Cystobacterineae</taxon>
        <taxon>Myxococcaceae</taxon>
        <taxon>Myxococcus</taxon>
    </lineage>
</organism>